<gene>
    <name evidence="1" type="primary">caiB</name>
    <name type="ordered locus">ECDH10B_0039</name>
</gene>
<accession>B1XBG3</accession>
<feature type="chain" id="PRO_1000136249" description="L-carnitine CoA-transferase">
    <location>
        <begin position="1"/>
        <end position="405"/>
    </location>
</feature>
<feature type="active site" description="Nucleophile" evidence="1">
    <location>
        <position position="169"/>
    </location>
</feature>
<feature type="binding site" evidence="1">
    <location>
        <position position="97"/>
    </location>
    <ligand>
        <name>CoA</name>
        <dbReference type="ChEBI" id="CHEBI:57287"/>
    </ligand>
</feature>
<feature type="binding site" evidence="1">
    <location>
        <position position="104"/>
    </location>
    <ligand>
        <name>CoA</name>
        <dbReference type="ChEBI" id="CHEBI:57287"/>
    </ligand>
</feature>
<evidence type="ECO:0000255" key="1">
    <source>
        <dbReference type="HAMAP-Rule" id="MF_01050"/>
    </source>
</evidence>
<dbReference type="EC" id="2.8.3.21" evidence="1"/>
<dbReference type="EMBL" id="CP000948">
    <property type="protein sequence ID" value="ACB01243.1"/>
    <property type="molecule type" value="Genomic_DNA"/>
</dbReference>
<dbReference type="RefSeq" id="WP_000349936.1">
    <property type="nucleotide sequence ID" value="NC_010473.1"/>
</dbReference>
<dbReference type="SMR" id="B1XBG3"/>
<dbReference type="KEGG" id="ecd:ECDH10B_0039"/>
<dbReference type="HOGENOM" id="CLU_033975_2_0_6"/>
<dbReference type="UniPathway" id="UPA00117"/>
<dbReference type="GO" id="GO:0005737">
    <property type="term" value="C:cytoplasm"/>
    <property type="evidence" value="ECO:0007669"/>
    <property type="project" value="UniProtKB-SubCell"/>
</dbReference>
<dbReference type="GO" id="GO:0008735">
    <property type="term" value="F:L-carnitine CoA-transferase activity"/>
    <property type="evidence" value="ECO:0007669"/>
    <property type="project" value="RHEA"/>
</dbReference>
<dbReference type="GO" id="GO:0009437">
    <property type="term" value="P:carnitine metabolic process"/>
    <property type="evidence" value="ECO:0007669"/>
    <property type="project" value="UniProtKB-UniRule"/>
</dbReference>
<dbReference type="FunFam" id="3.30.1540.10:FF:000001">
    <property type="entry name" value="L-carnitine CoA-transferase"/>
    <property type="match status" value="1"/>
</dbReference>
<dbReference type="Gene3D" id="3.40.50.10540">
    <property type="entry name" value="Crotonobetainyl-coa:carnitine coa-transferase, domain 1"/>
    <property type="match status" value="1"/>
</dbReference>
<dbReference type="Gene3D" id="3.30.1540.10">
    <property type="entry name" value="formyl-coa transferase, domain 3"/>
    <property type="match status" value="1"/>
</dbReference>
<dbReference type="HAMAP" id="MF_01050">
    <property type="entry name" value="CaiB"/>
    <property type="match status" value="1"/>
</dbReference>
<dbReference type="InterPro" id="IPR050509">
    <property type="entry name" value="CoA-transferase_III"/>
</dbReference>
<dbReference type="InterPro" id="IPR023452">
    <property type="entry name" value="CoA-Trfase_CaiB"/>
</dbReference>
<dbReference type="InterPro" id="IPR003673">
    <property type="entry name" value="CoA-Trfase_fam_III"/>
</dbReference>
<dbReference type="InterPro" id="IPR044855">
    <property type="entry name" value="CoA-Trfase_III_dom3_sf"/>
</dbReference>
<dbReference type="InterPro" id="IPR023606">
    <property type="entry name" value="CoA-Trfase_III_dom_1_sf"/>
</dbReference>
<dbReference type="NCBIfam" id="NF002914">
    <property type="entry name" value="PRK03525.1"/>
    <property type="match status" value="1"/>
</dbReference>
<dbReference type="PANTHER" id="PTHR48228:SF6">
    <property type="entry name" value="L-CARNITINE COA-TRANSFERASE"/>
    <property type="match status" value="1"/>
</dbReference>
<dbReference type="PANTHER" id="PTHR48228">
    <property type="entry name" value="SUCCINYL-COA--D-CITRAMALATE COA-TRANSFERASE"/>
    <property type="match status" value="1"/>
</dbReference>
<dbReference type="Pfam" id="PF02515">
    <property type="entry name" value="CoA_transf_3"/>
    <property type="match status" value="1"/>
</dbReference>
<dbReference type="SUPFAM" id="SSF89796">
    <property type="entry name" value="CoA-transferase family III (CaiB/BaiF)"/>
    <property type="match status" value="1"/>
</dbReference>
<comment type="function">
    <text evidence="1">Catalyzes the reversible transfer of the CoA moiety from gamma-butyrobetainyl-CoA to L-carnitine to generate L-carnitinyl-CoA and gamma-butyrobetaine. Is also able to catalyze the reversible transfer of the CoA moiety from gamma-butyrobetainyl-CoA or L-carnitinyl-CoA to crotonobetaine to generate crotonobetainyl-CoA.</text>
</comment>
<comment type="catalytic activity">
    <reaction evidence="1">
        <text>crotonobetainyl-CoA + (R)-carnitine = crotonobetaine + (R)-carnitinyl-CoA</text>
        <dbReference type="Rhea" id="RHEA:28526"/>
        <dbReference type="ChEBI" id="CHEBI:16347"/>
        <dbReference type="ChEBI" id="CHEBI:17237"/>
        <dbReference type="ChEBI" id="CHEBI:60932"/>
        <dbReference type="ChEBI" id="CHEBI:60933"/>
        <dbReference type="EC" id="2.8.3.21"/>
    </reaction>
</comment>
<comment type="catalytic activity">
    <reaction evidence="1">
        <text>4-(trimethylamino)butanoyl-CoA + (R)-carnitine = (R)-carnitinyl-CoA + 4-(trimethylamino)butanoate</text>
        <dbReference type="Rhea" id="RHEA:28418"/>
        <dbReference type="ChEBI" id="CHEBI:16244"/>
        <dbReference type="ChEBI" id="CHEBI:16347"/>
        <dbReference type="ChEBI" id="CHEBI:60932"/>
        <dbReference type="ChEBI" id="CHEBI:61513"/>
        <dbReference type="EC" id="2.8.3.21"/>
    </reaction>
</comment>
<comment type="pathway">
    <text evidence="1">Amine and polyamine metabolism; carnitine metabolism.</text>
</comment>
<comment type="subunit">
    <text evidence="1">Homodimer.</text>
</comment>
<comment type="subcellular location">
    <subcellularLocation>
        <location evidence="1">Cytoplasm</location>
    </subcellularLocation>
</comment>
<comment type="similarity">
    <text evidence="1">Belongs to the CoA-transferase III family. CaiB subfamily.</text>
</comment>
<organism>
    <name type="scientific">Escherichia coli (strain K12 / DH10B)</name>
    <dbReference type="NCBI Taxonomy" id="316385"/>
    <lineage>
        <taxon>Bacteria</taxon>
        <taxon>Pseudomonadati</taxon>
        <taxon>Pseudomonadota</taxon>
        <taxon>Gammaproteobacteria</taxon>
        <taxon>Enterobacterales</taxon>
        <taxon>Enterobacteriaceae</taxon>
        <taxon>Escherichia</taxon>
    </lineage>
</organism>
<reference key="1">
    <citation type="journal article" date="2008" name="J. Bacteriol.">
        <title>The complete genome sequence of Escherichia coli DH10B: insights into the biology of a laboratory workhorse.</title>
        <authorList>
            <person name="Durfee T."/>
            <person name="Nelson R."/>
            <person name="Baldwin S."/>
            <person name="Plunkett G. III"/>
            <person name="Burland V."/>
            <person name="Mau B."/>
            <person name="Petrosino J.F."/>
            <person name="Qin X."/>
            <person name="Muzny D.M."/>
            <person name="Ayele M."/>
            <person name="Gibbs R.A."/>
            <person name="Csorgo B."/>
            <person name="Posfai G."/>
            <person name="Weinstock G.M."/>
            <person name="Blattner F.R."/>
        </authorList>
    </citation>
    <scope>NUCLEOTIDE SEQUENCE [LARGE SCALE GENOMIC DNA]</scope>
    <source>
        <strain>K12 / DH10B</strain>
    </source>
</reference>
<protein>
    <recommendedName>
        <fullName evidence="1">L-carnitine CoA-transferase</fullName>
        <ecNumber evidence="1">2.8.3.21</ecNumber>
    </recommendedName>
    <alternativeName>
        <fullName evidence="1">Crotonobetainyl-CoA:carnitine CoA-transferase</fullName>
    </alternativeName>
</protein>
<proteinExistence type="inferred from homology"/>
<sequence length="405" mass="45127">MDHLPMPKFGPLAGLRVVFSGIEIAGPFAGQMFAEWGAEVIWIENVAWADTIRVQPNYPQLSRRNLHALSLNIFKDEGREAFLKLMETTDIFIEASKGPAFARRGITDEVLWQHNPKLVIAHLSGFGQYGTEEYTNLPAYNTIAQAFSGYLIQNGDVDQPMPAFPYTADYFSGLTATTAALAALHKVRETGKGESIDIAMYEVMLRMGQYFMMDYFNGGEMCPRMSKGKDPYYAGCGLYKCADGYIVMELVGITQIEECFKDIGLAHLLGTPEIPEGTQLIHRIECPYGPLVEEKLDAWLATHTIAEVKERFAELNIACAKVLTVPELESNPQYVARESITQWQTMDGRTCKGPNIMPKFKNNPGQIWRGMPSHGMDTAAILKNIGYSENDIQELVSKGLAKVED</sequence>
<keyword id="KW-0963">Cytoplasm</keyword>
<keyword id="KW-0808">Transferase</keyword>
<name>CAIB_ECODH</name>